<reference key="1">
    <citation type="journal article" date="2000" name="Nature">
        <title>Sequence and analysis of chromosome 3 of the plant Arabidopsis thaliana.</title>
        <authorList>
            <person name="Salanoubat M."/>
            <person name="Lemcke K."/>
            <person name="Rieger M."/>
            <person name="Ansorge W."/>
            <person name="Unseld M."/>
            <person name="Fartmann B."/>
            <person name="Valle G."/>
            <person name="Bloecker H."/>
            <person name="Perez-Alonso M."/>
            <person name="Obermaier B."/>
            <person name="Delseny M."/>
            <person name="Boutry M."/>
            <person name="Grivell L.A."/>
            <person name="Mache R."/>
            <person name="Puigdomenech P."/>
            <person name="De Simone V."/>
            <person name="Choisne N."/>
            <person name="Artiguenave F."/>
            <person name="Robert C."/>
            <person name="Brottier P."/>
            <person name="Wincker P."/>
            <person name="Cattolico L."/>
            <person name="Weissenbach J."/>
            <person name="Saurin W."/>
            <person name="Quetier F."/>
            <person name="Schaefer M."/>
            <person name="Mueller-Auer S."/>
            <person name="Gabel C."/>
            <person name="Fuchs M."/>
            <person name="Benes V."/>
            <person name="Wurmbach E."/>
            <person name="Drzonek H."/>
            <person name="Erfle H."/>
            <person name="Jordan N."/>
            <person name="Bangert S."/>
            <person name="Wiedelmann R."/>
            <person name="Kranz H."/>
            <person name="Voss H."/>
            <person name="Holland R."/>
            <person name="Brandt P."/>
            <person name="Nyakatura G."/>
            <person name="Vezzi A."/>
            <person name="D'Angelo M."/>
            <person name="Pallavicini A."/>
            <person name="Toppo S."/>
            <person name="Simionati B."/>
            <person name="Conrad A."/>
            <person name="Hornischer K."/>
            <person name="Kauer G."/>
            <person name="Loehnert T.-H."/>
            <person name="Nordsiek G."/>
            <person name="Reichelt J."/>
            <person name="Scharfe M."/>
            <person name="Schoen O."/>
            <person name="Bargues M."/>
            <person name="Terol J."/>
            <person name="Climent J."/>
            <person name="Navarro P."/>
            <person name="Collado C."/>
            <person name="Perez-Perez A."/>
            <person name="Ottenwaelder B."/>
            <person name="Duchemin D."/>
            <person name="Cooke R."/>
            <person name="Laudie M."/>
            <person name="Berger-Llauro C."/>
            <person name="Purnelle B."/>
            <person name="Masuy D."/>
            <person name="de Haan M."/>
            <person name="Maarse A.C."/>
            <person name="Alcaraz J.-P."/>
            <person name="Cottet A."/>
            <person name="Casacuberta E."/>
            <person name="Monfort A."/>
            <person name="Argiriou A."/>
            <person name="Flores M."/>
            <person name="Liguori R."/>
            <person name="Vitale D."/>
            <person name="Mannhaupt G."/>
            <person name="Haase D."/>
            <person name="Schoof H."/>
            <person name="Rudd S."/>
            <person name="Zaccaria P."/>
            <person name="Mewes H.-W."/>
            <person name="Mayer K.F.X."/>
            <person name="Kaul S."/>
            <person name="Town C.D."/>
            <person name="Koo H.L."/>
            <person name="Tallon L.J."/>
            <person name="Jenkins J."/>
            <person name="Rooney T."/>
            <person name="Rizzo M."/>
            <person name="Walts A."/>
            <person name="Utterback T."/>
            <person name="Fujii C.Y."/>
            <person name="Shea T.P."/>
            <person name="Creasy T.H."/>
            <person name="Haas B."/>
            <person name="Maiti R."/>
            <person name="Wu D."/>
            <person name="Peterson J."/>
            <person name="Van Aken S."/>
            <person name="Pai G."/>
            <person name="Militscher J."/>
            <person name="Sellers P."/>
            <person name="Gill J.E."/>
            <person name="Feldblyum T.V."/>
            <person name="Preuss D."/>
            <person name="Lin X."/>
            <person name="Nierman W.C."/>
            <person name="Salzberg S.L."/>
            <person name="White O."/>
            <person name="Venter J.C."/>
            <person name="Fraser C.M."/>
            <person name="Kaneko T."/>
            <person name="Nakamura Y."/>
            <person name="Sato S."/>
            <person name="Kato T."/>
            <person name="Asamizu E."/>
            <person name="Sasamoto S."/>
            <person name="Kimura T."/>
            <person name="Idesawa K."/>
            <person name="Kawashima K."/>
            <person name="Kishida Y."/>
            <person name="Kiyokawa C."/>
            <person name="Kohara M."/>
            <person name="Matsumoto M."/>
            <person name="Matsuno A."/>
            <person name="Muraki A."/>
            <person name="Nakayama S."/>
            <person name="Nakazaki N."/>
            <person name="Shinpo S."/>
            <person name="Takeuchi C."/>
            <person name="Wada T."/>
            <person name="Watanabe A."/>
            <person name="Yamada M."/>
            <person name="Yasuda M."/>
            <person name="Tabata S."/>
        </authorList>
    </citation>
    <scope>NUCLEOTIDE SEQUENCE [LARGE SCALE GENOMIC DNA] OF 8-470</scope>
    <source>
        <strain>cv. Columbia</strain>
    </source>
</reference>
<reference key="2">
    <citation type="journal article" date="2017" name="Plant J.">
        <title>Araport11: a complete reannotation of the Arabidopsis thaliana reference genome.</title>
        <authorList>
            <person name="Cheng C.Y."/>
            <person name="Krishnakumar V."/>
            <person name="Chan A.P."/>
            <person name="Thibaud-Nissen F."/>
            <person name="Schobel S."/>
            <person name="Town C.D."/>
        </authorList>
    </citation>
    <scope>GENOME REANNOTATION</scope>
    <source>
        <strain>cv. Columbia</strain>
    </source>
</reference>
<reference key="3">
    <citation type="submission" date="2006-07" db="EMBL/GenBank/DDBJ databases">
        <title>Large-scale analysis of RIKEN Arabidopsis full-length (RAFL) cDNAs.</title>
        <authorList>
            <person name="Totoki Y."/>
            <person name="Seki M."/>
            <person name="Ishida J."/>
            <person name="Nakajima M."/>
            <person name="Enju A."/>
            <person name="Kamiya A."/>
            <person name="Narusaka M."/>
            <person name="Shin-i T."/>
            <person name="Nakagawa M."/>
            <person name="Sakamoto N."/>
            <person name="Oishi K."/>
            <person name="Kohara Y."/>
            <person name="Kobayashi M."/>
            <person name="Toyoda A."/>
            <person name="Sakaki Y."/>
            <person name="Sakurai T."/>
            <person name="Iida K."/>
            <person name="Akiyama K."/>
            <person name="Satou M."/>
            <person name="Toyoda T."/>
            <person name="Konagaya A."/>
            <person name="Carninci P."/>
            <person name="Kawai J."/>
            <person name="Hayashizaki Y."/>
            <person name="Shinozaki K."/>
        </authorList>
    </citation>
    <scope>NUCLEOTIDE SEQUENCE [LARGE SCALE MRNA]</scope>
    <source>
        <strain>cv. Columbia</strain>
    </source>
</reference>
<reference key="4">
    <citation type="journal article" date="2006" name="BMC Evol. Biol.">
        <title>The monosaccharide transporter gene family in land plants is ancient and shows differential subfamily expression and expansion across lineages.</title>
        <authorList>
            <person name="Johnson D.A."/>
            <person name="Hill J.P."/>
            <person name="Thomas M.A."/>
        </authorList>
    </citation>
    <scope>GENE FAMILY</scope>
</reference>
<dbReference type="EMBL" id="AC009177">
    <property type="protein sequence ID" value="AAF27021.1"/>
    <property type="status" value="ALT_SEQ"/>
    <property type="molecule type" value="Genomic_DNA"/>
</dbReference>
<dbReference type="EMBL" id="CP002686">
    <property type="protein sequence ID" value="AEE74191.1"/>
    <property type="molecule type" value="Genomic_DNA"/>
</dbReference>
<dbReference type="EMBL" id="CP002686">
    <property type="protein sequence ID" value="ANM64576.1"/>
    <property type="molecule type" value="Genomic_DNA"/>
</dbReference>
<dbReference type="EMBL" id="AK228841">
    <property type="protein sequence ID" value="BAF00736.1"/>
    <property type="molecule type" value="mRNA"/>
</dbReference>
<dbReference type="RefSeq" id="NP_001326593.1">
    <property type="nucleotide sequence ID" value="NM_001337565.1"/>
</dbReference>
<dbReference type="RefSeq" id="NP_187166.2">
    <property type="nucleotide sequence ID" value="NM_111387.5"/>
</dbReference>
<dbReference type="SMR" id="Q0WQ63"/>
<dbReference type="BioGRID" id="5012">
    <property type="interactions" value="23"/>
</dbReference>
<dbReference type="FunCoup" id="Q0WQ63">
    <property type="interactions" value="686"/>
</dbReference>
<dbReference type="IntAct" id="Q0WQ63">
    <property type="interactions" value="22"/>
</dbReference>
<dbReference type="STRING" id="3702.Q0WQ63"/>
<dbReference type="iPTMnet" id="Q0WQ63"/>
<dbReference type="PaxDb" id="3702-AT3G05150.1"/>
<dbReference type="ProteomicsDB" id="220672"/>
<dbReference type="EnsemblPlants" id="AT3G05150.1">
    <property type="protein sequence ID" value="AT3G05150.1"/>
    <property type="gene ID" value="AT3G05150"/>
</dbReference>
<dbReference type="EnsemblPlants" id="AT3G05150.3">
    <property type="protein sequence ID" value="AT3G05150.3"/>
    <property type="gene ID" value="AT3G05150"/>
</dbReference>
<dbReference type="GeneID" id="819677"/>
<dbReference type="Gramene" id="AT3G05150.1">
    <property type="protein sequence ID" value="AT3G05150.1"/>
    <property type="gene ID" value="AT3G05150"/>
</dbReference>
<dbReference type="Gramene" id="AT3G05150.3">
    <property type="protein sequence ID" value="AT3G05150.3"/>
    <property type="gene ID" value="AT3G05150"/>
</dbReference>
<dbReference type="KEGG" id="ath:AT3G05150"/>
<dbReference type="Araport" id="AT3G05150"/>
<dbReference type="TAIR" id="AT3G05150"/>
<dbReference type="eggNOG" id="KOG0254">
    <property type="taxonomic scope" value="Eukaryota"/>
</dbReference>
<dbReference type="HOGENOM" id="CLU_001265_30_5_1"/>
<dbReference type="InParanoid" id="Q0WQ63"/>
<dbReference type="PhylomeDB" id="Q0WQ63"/>
<dbReference type="PRO" id="PR:Q0WQ63"/>
<dbReference type="Proteomes" id="UP000006548">
    <property type="component" value="Chromosome 3"/>
</dbReference>
<dbReference type="ExpressionAtlas" id="Q0WQ63">
    <property type="expression patterns" value="baseline and differential"/>
</dbReference>
<dbReference type="GO" id="GO:0016020">
    <property type="term" value="C:membrane"/>
    <property type="evidence" value="ECO:0007669"/>
    <property type="project" value="UniProtKB-SubCell"/>
</dbReference>
<dbReference type="GO" id="GO:0005634">
    <property type="term" value="C:nucleus"/>
    <property type="evidence" value="ECO:0000314"/>
    <property type="project" value="TAIR"/>
</dbReference>
<dbReference type="GO" id="GO:0051119">
    <property type="term" value="F:sugar transmembrane transporter activity"/>
    <property type="evidence" value="ECO:0007669"/>
    <property type="project" value="InterPro"/>
</dbReference>
<dbReference type="CDD" id="cd17358">
    <property type="entry name" value="MFS_GLUT6_8_Class3_like"/>
    <property type="match status" value="1"/>
</dbReference>
<dbReference type="FunFam" id="1.20.1250.20:FF:000043">
    <property type="entry name" value="sugar transporter ERD6-like 6"/>
    <property type="match status" value="1"/>
</dbReference>
<dbReference type="Gene3D" id="1.20.1250.20">
    <property type="entry name" value="MFS general substrate transporter like domains"/>
    <property type="match status" value="1"/>
</dbReference>
<dbReference type="InterPro" id="IPR020846">
    <property type="entry name" value="MFS_dom"/>
</dbReference>
<dbReference type="InterPro" id="IPR044775">
    <property type="entry name" value="MFS_ERD6/Tret1-like"/>
</dbReference>
<dbReference type="InterPro" id="IPR005828">
    <property type="entry name" value="MFS_sugar_transport-like"/>
</dbReference>
<dbReference type="InterPro" id="IPR036259">
    <property type="entry name" value="MFS_trans_sf"/>
</dbReference>
<dbReference type="InterPro" id="IPR050549">
    <property type="entry name" value="MFS_Trehalose_Transporter"/>
</dbReference>
<dbReference type="InterPro" id="IPR003663">
    <property type="entry name" value="Sugar/inositol_transpt"/>
</dbReference>
<dbReference type="InterPro" id="IPR005829">
    <property type="entry name" value="Sugar_transporter_CS"/>
</dbReference>
<dbReference type="NCBIfam" id="TIGR00879">
    <property type="entry name" value="SP"/>
    <property type="match status" value="1"/>
</dbReference>
<dbReference type="PANTHER" id="PTHR48021">
    <property type="match status" value="1"/>
</dbReference>
<dbReference type="PANTHER" id="PTHR48021:SF21">
    <property type="entry name" value="SUGAR TRANSPORTER ERD6-LIKE 8"/>
    <property type="match status" value="1"/>
</dbReference>
<dbReference type="Pfam" id="PF00083">
    <property type="entry name" value="Sugar_tr"/>
    <property type="match status" value="1"/>
</dbReference>
<dbReference type="PRINTS" id="PR00171">
    <property type="entry name" value="SUGRTRNSPORT"/>
</dbReference>
<dbReference type="SUPFAM" id="SSF103473">
    <property type="entry name" value="MFS general substrate transporter"/>
    <property type="match status" value="1"/>
</dbReference>
<dbReference type="PROSITE" id="PS50850">
    <property type="entry name" value="MFS"/>
    <property type="match status" value="1"/>
</dbReference>
<dbReference type="PROSITE" id="PS00216">
    <property type="entry name" value="SUGAR_TRANSPORT_1"/>
    <property type="match status" value="1"/>
</dbReference>
<comment type="function">
    <text evidence="4">Sugar transporter.</text>
</comment>
<comment type="subcellular location">
    <subcellularLocation>
        <location evidence="1">Membrane</location>
        <topology evidence="1">Multi-pass membrane protein</topology>
    </subcellularLocation>
</comment>
<comment type="similarity">
    <text evidence="4">Belongs to the major facilitator superfamily. Sugar transporter (TC 2.A.1.1) family.</text>
</comment>
<comment type="sequence caution" evidence="4">
    <conflict type="erroneous gene model prediction">
        <sequence resource="EMBL-CDS" id="AAF27021"/>
    </conflict>
</comment>
<accession>Q0WQ63</accession>
<accession>Q9MAA4</accession>
<evidence type="ECO:0000250" key="1"/>
<evidence type="ECO:0000255" key="2"/>
<evidence type="ECO:0000256" key="3">
    <source>
        <dbReference type="SAM" id="MobiDB-lite"/>
    </source>
</evidence>
<evidence type="ECO:0000305" key="4"/>
<organism>
    <name type="scientific">Arabidopsis thaliana</name>
    <name type="common">Mouse-ear cress</name>
    <dbReference type="NCBI Taxonomy" id="3702"/>
    <lineage>
        <taxon>Eukaryota</taxon>
        <taxon>Viridiplantae</taxon>
        <taxon>Streptophyta</taxon>
        <taxon>Embryophyta</taxon>
        <taxon>Tracheophyta</taxon>
        <taxon>Spermatophyta</taxon>
        <taxon>Magnoliopsida</taxon>
        <taxon>eudicotyledons</taxon>
        <taxon>Gunneridae</taxon>
        <taxon>Pentapetalae</taxon>
        <taxon>rosids</taxon>
        <taxon>malvids</taxon>
        <taxon>Brassicales</taxon>
        <taxon>Brassicaceae</taxon>
        <taxon>Camelineae</taxon>
        <taxon>Arabidopsis</taxon>
    </lineage>
</organism>
<name>ERDL8_ARATH</name>
<protein>
    <recommendedName>
        <fullName>Sugar transporter ERD6-like 8</fullName>
    </recommendedName>
</protein>
<feature type="chain" id="PRO_0000259858" description="Sugar transporter ERD6-like 8">
    <location>
        <begin position="1"/>
        <end position="470"/>
    </location>
</feature>
<feature type="transmembrane region" description="Helical; Name=1" evidence="2">
    <location>
        <begin position="33"/>
        <end position="53"/>
    </location>
</feature>
<feature type="transmembrane region" description="Helical; Name=2" evidence="2">
    <location>
        <begin position="73"/>
        <end position="93"/>
    </location>
</feature>
<feature type="transmembrane region" description="Helical; Name=3" evidence="2">
    <location>
        <begin position="110"/>
        <end position="130"/>
    </location>
</feature>
<feature type="transmembrane region" description="Helical; Name=4" evidence="2">
    <location>
        <begin position="133"/>
        <end position="153"/>
    </location>
</feature>
<feature type="transmembrane region" description="Helical; Name=5" evidence="2">
    <location>
        <begin position="164"/>
        <end position="184"/>
    </location>
</feature>
<feature type="transmembrane region" description="Helical; Name=6" evidence="2">
    <location>
        <begin position="188"/>
        <end position="208"/>
    </location>
</feature>
<feature type="transmembrane region" description="Helical; Name=7" evidence="2">
    <location>
        <begin position="270"/>
        <end position="290"/>
    </location>
</feature>
<feature type="transmembrane region" description="Helical; Name=8" evidence="2">
    <location>
        <begin position="307"/>
        <end position="327"/>
    </location>
</feature>
<feature type="transmembrane region" description="Helical; Name=9" evidence="2">
    <location>
        <begin position="335"/>
        <end position="355"/>
    </location>
</feature>
<feature type="transmembrane region" description="Helical; Name=10" evidence="2">
    <location>
        <begin position="373"/>
        <end position="393"/>
    </location>
</feature>
<feature type="transmembrane region" description="Helical; Name=11" evidence="2">
    <location>
        <begin position="409"/>
        <end position="429"/>
    </location>
</feature>
<feature type="transmembrane region" description="Helical; Name=12" evidence="2">
    <location>
        <begin position="434"/>
        <end position="454"/>
    </location>
</feature>
<feature type="region of interest" description="Disordered" evidence="3">
    <location>
        <begin position="1"/>
        <end position="24"/>
    </location>
</feature>
<feature type="compositionally biased region" description="Basic and acidic residues" evidence="3">
    <location>
        <begin position="1"/>
        <end position="16"/>
    </location>
</feature>
<sequence length="470" mass="51024">METRKDDMEKRNDKSEPLLLPENGSDVSEEASWMVYLSTIIAVCGSYEFGTCVGYSAPTQFGIMEELNLSYSQFSVFGSILNMGAVLGAITSGKISDFIGRKGAMRLSSVISAIGWLIIYLAKGDVPLDFGRFLTGYGCGTLSFVVPVFIAEISPRKLRGALATLNQLFIVIGLASMFLIGAVVNWRTLALTGVAPCVVLFFGTWFIPESPRWLEMVGRHSDFEIALQKLRGPQANITREAGEIQEYLASLAHLPKATLMDLIDKKNIRFVIVGVGLMFFQQFVGINGVIFYAQQIFVSAGASPTLGSILYSIEQVVLTALGATLLIDRLGRRPLLMASAVGMLIGCLLIGNSFLLKAHGLALDIIPALAVSGVLVYIGSFSIGMGAIPWVIMSEIFPINLKGTAGGLVTVVNWLSSWLVSFTFNFLMIWSPHGTFYVYGGVCVLAIIFIAKLVPETKGRTLEEIQAMMM</sequence>
<proteinExistence type="evidence at transcript level"/>
<gene>
    <name type="ordered locus">At3g05150</name>
    <name type="ORF">T12H1.11</name>
</gene>
<keyword id="KW-0472">Membrane</keyword>
<keyword id="KW-1185">Reference proteome</keyword>
<keyword id="KW-0762">Sugar transport</keyword>
<keyword id="KW-0812">Transmembrane</keyword>
<keyword id="KW-1133">Transmembrane helix</keyword>
<keyword id="KW-0813">Transport</keyword>